<comment type="function">
    <text evidence="1">One of the primary rRNA binding proteins, it binds directly to 16S rRNA central domain where it helps coordinate assembly of the platform of the 30S subunit.</text>
</comment>
<comment type="subunit">
    <text evidence="1">Part of the 30S ribosomal subunit. Contacts proteins S5 and S12.</text>
</comment>
<comment type="similarity">
    <text evidence="1">Belongs to the universal ribosomal protein uS8 family.</text>
</comment>
<accession>Q03IG5</accession>
<evidence type="ECO:0000255" key="1">
    <source>
        <dbReference type="HAMAP-Rule" id="MF_01302"/>
    </source>
</evidence>
<evidence type="ECO:0000305" key="2"/>
<dbReference type="EMBL" id="CP000419">
    <property type="protein sequence ID" value="ABJ67007.1"/>
    <property type="molecule type" value="Genomic_DNA"/>
</dbReference>
<dbReference type="RefSeq" id="WP_002952146.1">
    <property type="nucleotide sequence ID" value="NC_008532.1"/>
</dbReference>
<dbReference type="SMR" id="Q03IG5"/>
<dbReference type="GeneID" id="66899648"/>
<dbReference type="KEGG" id="ste:STER_1893"/>
<dbReference type="HOGENOM" id="CLU_098428_0_2_9"/>
<dbReference type="GO" id="GO:1990904">
    <property type="term" value="C:ribonucleoprotein complex"/>
    <property type="evidence" value="ECO:0007669"/>
    <property type="project" value="UniProtKB-KW"/>
</dbReference>
<dbReference type="GO" id="GO:0005840">
    <property type="term" value="C:ribosome"/>
    <property type="evidence" value="ECO:0007669"/>
    <property type="project" value="UniProtKB-KW"/>
</dbReference>
<dbReference type="GO" id="GO:0019843">
    <property type="term" value="F:rRNA binding"/>
    <property type="evidence" value="ECO:0007669"/>
    <property type="project" value="UniProtKB-UniRule"/>
</dbReference>
<dbReference type="GO" id="GO:0003735">
    <property type="term" value="F:structural constituent of ribosome"/>
    <property type="evidence" value="ECO:0007669"/>
    <property type="project" value="InterPro"/>
</dbReference>
<dbReference type="GO" id="GO:0006412">
    <property type="term" value="P:translation"/>
    <property type="evidence" value="ECO:0007669"/>
    <property type="project" value="UniProtKB-UniRule"/>
</dbReference>
<dbReference type="FunFam" id="3.30.1370.30:FF:000002">
    <property type="entry name" value="30S ribosomal protein S8"/>
    <property type="match status" value="1"/>
</dbReference>
<dbReference type="FunFam" id="3.30.1490.10:FF:000001">
    <property type="entry name" value="30S ribosomal protein S8"/>
    <property type="match status" value="1"/>
</dbReference>
<dbReference type="Gene3D" id="3.30.1370.30">
    <property type="match status" value="1"/>
</dbReference>
<dbReference type="Gene3D" id="3.30.1490.10">
    <property type="match status" value="1"/>
</dbReference>
<dbReference type="HAMAP" id="MF_01302_B">
    <property type="entry name" value="Ribosomal_uS8_B"/>
    <property type="match status" value="1"/>
</dbReference>
<dbReference type="InterPro" id="IPR000630">
    <property type="entry name" value="Ribosomal_uS8"/>
</dbReference>
<dbReference type="InterPro" id="IPR047863">
    <property type="entry name" value="Ribosomal_uS8_CS"/>
</dbReference>
<dbReference type="InterPro" id="IPR035987">
    <property type="entry name" value="Ribosomal_uS8_sf"/>
</dbReference>
<dbReference type="NCBIfam" id="NF001109">
    <property type="entry name" value="PRK00136.1"/>
    <property type="match status" value="1"/>
</dbReference>
<dbReference type="PANTHER" id="PTHR11758">
    <property type="entry name" value="40S RIBOSOMAL PROTEIN S15A"/>
    <property type="match status" value="1"/>
</dbReference>
<dbReference type="Pfam" id="PF00410">
    <property type="entry name" value="Ribosomal_S8"/>
    <property type="match status" value="1"/>
</dbReference>
<dbReference type="SUPFAM" id="SSF56047">
    <property type="entry name" value="Ribosomal protein S8"/>
    <property type="match status" value="1"/>
</dbReference>
<dbReference type="PROSITE" id="PS00053">
    <property type="entry name" value="RIBOSOMAL_S8"/>
    <property type="match status" value="1"/>
</dbReference>
<organism>
    <name type="scientific">Streptococcus thermophilus (strain ATCC BAA-491 / LMD-9)</name>
    <dbReference type="NCBI Taxonomy" id="322159"/>
    <lineage>
        <taxon>Bacteria</taxon>
        <taxon>Bacillati</taxon>
        <taxon>Bacillota</taxon>
        <taxon>Bacilli</taxon>
        <taxon>Lactobacillales</taxon>
        <taxon>Streptococcaceae</taxon>
        <taxon>Streptococcus</taxon>
    </lineage>
</organism>
<proteinExistence type="inferred from homology"/>
<keyword id="KW-0687">Ribonucleoprotein</keyword>
<keyword id="KW-0689">Ribosomal protein</keyword>
<keyword id="KW-0694">RNA-binding</keyword>
<keyword id="KW-0699">rRNA-binding</keyword>
<sequence>MVMTDPIADFLTRIRNANQAKHEVLEVPASNIKKGIAEILKREGFVKNVEVIEDDKQGIIRVFLKYGQNGERVITNLKRISKPGLRVYSKREDIPKVLNGLGIAIISTSEGLLTDKEARQKNVGGEVIAYVW</sequence>
<reference key="1">
    <citation type="journal article" date="2006" name="Proc. Natl. Acad. Sci. U.S.A.">
        <title>Comparative genomics of the lactic acid bacteria.</title>
        <authorList>
            <person name="Makarova K.S."/>
            <person name="Slesarev A."/>
            <person name="Wolf Y.I."/>
            <person name="Sorokin A."/>
            <person name="Mirkin B."/>
            <person name="Koonin E.V."/>
            <person name="Pavlov A."/>
            <person name="Pavlova N."/>
            <person name="Karamychev V."/>
            <person name="Polouchine N."/>
            <person name="Shakhova V."/>
            <person name="Grigoriev I."/>
            <person name="Lou Y."/>
            <person name="Rohksar D."/>
            <person name="Lucas S."/>
            <person name="Huang K."/>
            <person name="Goodstein D.M."/>
            <person name="Hawkins T."/>
            <person name="Plengvidhya V."/>
            <person name="Welker D."/>
            <person name="Hughes J."/>
            <person name="Goh Y."/>
            <person name="Benson A."/>
            <person name="Baldwin K."/>
            <person name="Lee J.-H."/>
            <person name="Diaz-Muniz I."/>
            <person name="Dosti B."/>
            <person name="Smeianov V."/>
            <person name="Wechter W."/>
            <person name="Barabote R."/>
            <person name="Lorca G."/>
            <person name="Altermann E."/>
            <person name="Barrangou R."/>
            <person name="Ganesan B."/>
            <person name="Xie Y."/>
            <person name="Rawsthorne H."/>
            <person name="Tamir D."/>
            <person name="Parker C."/>
            <person name="Breidt F."/>
            <person name="Broadbent J.R."/>
            <person name="Hutkins R."/>
            <person name="O'Sullivan D."/>
            <person name="Steele J."/>
            <person name="Unlu G."/>
            <person name="Saier M.H. Jr."/>
            <person name="Klaenhammer T."/>
            <person name="Richardson P."/>
            <person name="Kozyavkin S."/>
            <person name="Weimer B.C."/>
            <person name="Mills D.A."/>
        </authorList>
    </citation>
    <scope>NUCLEOTIDE SEQUENCE [LARGE SCALE GENOMIC DNA]</scope>
    <source>
        <strain>ATCC BAA-491 / LMD-9</strain>
    </source>
</reference>
<gene>
    <name evidence="1" type="primary">rpsH</name>
    <name type="ordered locus">STER_1893</name>
</gene>
<protein>
    <recommendedName>
        <fullName evidence="1">Small ribosomal subunit protein uS8</fullName>
    </recommendedName>
    <alternativeName>
        <fullName evidence="2">30S ribosomal protein S8</fullName>
    </alternativeName>
</protein>
<feature type="chain" id="PRO_0000290947" description="Small ribosomal subunit protein uS8">
    <location>
        <begin position="1"/>
        <end position="132"/>
    </location>
</feature>
<name>RS8_STRTD</name>